<name>ORN_YERPS</name>
<dbReference type="EC" id="3.1.15.-" evidence="1"/>
<dbReference type="EMBL" id="BX936398">
    <property type="protein sequence ID" value="CAH19658.1"/>
    <property type="molecule type" value="Genomic_DNA"/>
</dbReference>
<dbReference type="RefSeq" id="WP_011191612.1">
    <property type="nucleotide sequence ID" value="NC_006155.1"/>
</dbReference>
<dbReference type="SMR" id="Q66FC2"/>
<dbReference type="GeneID" id="49787587"/>
<dbReference type="KEGG" id="ypo:BZ17_2151"/>
<dbReference type="KEGG" id="yps:YPTB0418"/>
<dbReference type="PATRIC" id="fig|273123.14.peg.2275"/>
<dbReference type="Proteomes" id="UP000001011">
    <property type="component" value="Chromosome"/>
</dbReference>
<dbReference type="GO" id="GO:0005737">
    <property type="term" value="C:cytoplasm"/>
    <property type="evidence" value="ECO:0007669"/>
    <property type="project" value="UniProtKB-SubCell"/>
</dbReference>
<dbReference type="GO" id="GO:0000175">
    <property type="term" value="F:3'-5'-RNA exonuclease activity"/>
    <property type="evidence" value="ECO:0007669"/>
    <property type="project" value="InterPro"/>
</dbReference>
<dbReference type="GO" id="GO:0003676">
    <property type="term" value="F:nucleic acid binding"/>
    <property type="evidence" value="ECO:0007669"/>
    <property type="project" value="InterPro"/>
</dbReference>
<dbReference type="GO" id="GO:0006259">
    <property type="term" value="P:DNA metabolic process"/>
    <property type="evidence" value="ECO:0007669"/>
    <property type="project" value="UniProtKB-ARBA"/>
</dbReference>
<dbReference type="CDD" id="cd06135">
    <property type="entry name" value="Orn"/>
    <property type="match status" value="1"/>
</dbReference>
<dbReference type="FunFam" id="3.30.420.10:FF:000003">
    <property type="entry name" value="Oligoribonuclease"/>
    <property type="match status" value="1"/>
</dbReference>
<dbReference type="Gene3D" id="3.30.420.10">
    <property type="entry name" value="Ribonuclease H-like superfamily/Ribonuclease H"/>
    <property type="match status" value="1"/>
</dbReference>
<dbReference type="HAMAP" id="MF_00045">
    <property type="entry name" value="Oligoribonuclease"/>
    <property type="match status" value="1"/>
</dbReference>
<dbReference type="InterPro" id="IPR013520">
    <property type="entry name" value="Exonuclease_RNaseT/DNA_pol3"/>
</dbReference>
<dbReference type="InterPro" id="IPR022894">
    <property type="entry name" value="Oligoribonuclease"/>
</dbReference>
<dbReference type="InterPro" id="IPR012337">
    <property type="entry name" value="RNaseH-like_sf"/>
</dbReference>
<dbReference type="InterPro" id="IPR036397">
    <property type="entry name" value="RNaseH_sf"/>
</dbReference>
<dbReference type="NCBIfam" id="NF003765">
    <property type="entry name" value="PRK05359.1"/>
    <property type="match status" value="1"/>
</dbReference>
<dbReference type="PANTHER" id="PTHR11046">
    <property type="entry name" value="OLIGORIBONUCLEASE, MITOCHONDRIAL"/>
    <property type="match status" value="1"/>
</dbReference>
<dbReference type="PANTHER" id="PTHR11046:SF0">
    <property type="entry name" value="OLIGORIBONUCLEASE, MITOCHONDRIAL"/>
    <property type="match status" value="1"/>
</dbReference>
<dbReference type="Pfam" id="PF00929">
    <property type="entry name" value="RNase_T"/>
    <property type="match status" value="1"/>
</dbReference>
<dbReference type="SMART" id="SM00479">
    <property type="entry name" value="EXOIII"/>
    <property type="match status" value="1"/>
</dbReference>
<dbReference type="SUPFAM" id="SSF53098">
    <property type="entry name" value="Ribonuclease H-like"/>
    <property type="match status" value="1"/>
</dbReference>
<sequence>MAENQNNLIWIDLEMTGLDPERDRIIEIATLVTDANLNILAEGPVLAVHQSAEQLGLMDEWNVRTHTGSGLVERVKTSPFNDRDAELQTIEFLKQWVPAGVSPICGNSVGQDRRFLFRYMPELEAYFHYRYVDVSTLKELARRWKPEILAGFKKQNTHQALDDIRESVAELAYYREHFIQS</sequence>
<reference key="1">
    <citation type="journal article" date="2004" name="Proc. Natl. Acad. Sci. U.S.A.">
        <title>Insights into the evolution of Yersinia pestis through whole-genome comparison with Yersinia pseudotuberculosis.</title>
        <authorList>
            <person name="Chain P.S.G."/>
            <person name="Carniel E."/>
            <person name="Larimer F.W."/>
            <person name="Lamerdin J."/>
            <person name="Stoutland P.O."/>
            <person name="Regala W.M."/>
            <person name="Georgescu A.M."/>
            <person name="Vergez L.M."/>
            <person name="Land M.L."/>
            <person name="Motin V.L."/>
            <person name="Brubaker R.R."/>
            <person name="Fowler J."/>
            <person name="Hinnebusch J."/>
            <person name="Marceau M."/>
            <person name="Medigue C."/>
            <person name="Simonet M."/>
            <person name="Chenal-Francisque V."/>
            <person name="Souza B."/>
            <person name="Dacheux D."/>
            <person name="Elliott J.M."/>
            <person name="Derbise A."/>
            <person name="Hauser L.J."/>
            <person name="Garcia E."/>
        </authorList>
    </citation>
    <scope>NUCLEOTIDE SEQUENCE [LARGE SCALE GENOMIC DNA]</scope>
    <source>
        <strain>IP32953</strain>
    </source>
</reference>
<evidence type="ECO:0000255" key="1">
    <source>
        <dbReference type="HAMAP-Rule" id="MF_00045"/>
    </source>
</evidence>
<keyword id="KW-0963">Cytoplasm</keyword>
<keyword id="KW-0269">Exonuclease</keyword>
<keyword id="KW-0378">Hydrolase</keyword>
<keyword id="KW-0540">Nuclease</keyword>
<protein>
    <recommendedName>
        <fullName evidence="1">Oligoribonuclease</fullName>
        <ecNumber evidence="1">3.1.15.-</ecNumber>
    </recommendedName>
</protein>
<accession>Q66FC2</accession>
<organism>
    <name type="scientific">Yersinia pseudotuberculosis serotype I (strain IP32953)</name>
    <dbReference type="NCBI Taxonomy" id="273123"/>
    <lineage>
        <taxon>Bacteria</taxon>
        <taxon>Pseudomonadati</taxon>
        <taxon>Pseudomonadota</taxon>
        <taxon>Gammaproteobacteria</taxon>
        <taxon>Enterobacterales</taxon>
        <taxon>Yersiniaceae</taxon>
        <taxon>Yersinia</taxon>
    </lineage>
</organism>
<feature type="chain" id="PRO_0000111089" description="Oligoribonuclease">
    <location>
        <begin position="1"/>
        <end position="181"/>
    </location>
</feature>
<feature type="domain" description="Exonuclease" evidence="1">
    <location>
        <begin position="8"/>
        <end position="171"/>
    </location>
</feature>
<feature type="active site" evidence="1">
    <location>
        <position position="129"/>
    </location>
</feature>
<proteinExistence type="inferred from homology"/>
<gene>
    <name evidence="1" type="primary">orn</name>
    <name type="ordered locus">YPTB0418</name>
</gene>
<comment type="function">
    <text evidence="1">3'-to-5' exoribonuclease specific for small oligoribonucleotides.</text>
</comment>
<comment type="subcellular location">
    <subcellularLocation>
        <location evidence="1">Cytoplasm</location>
    </subcellularLocation>
</comment>
<comment type="similarity">
    <text evidence="1">Belongs to the oligoribonuclease family.</text>
</comment>